<gene>
    <name evidence="1" type="primary">rplX</name>
    <name type="ordered locus">Rv0715</name>
    <name type="ORF">MTCY210.34</name>
</gene>
<accession>P9WHB7</accession>
<accession>L0T697</accession>
<accession>P60627</accession>
<accession>P95063</accession>
<sequence>MKVHKGDTVLVISGKDKGAKGKVLQAYPDRNRVLVEGVNRIKKHTAISTTQRGARSGGIVTQEAPIHVSNVMVVDSDGKPTRIGYRVDEETGKRVRISKRNGKDI</sequence>
<evidence type="ECO:0000255" key="1">
    <source>
        <dbReference type="HAMAP-Rule" id="MF_01326"/>
    </source>
</evidence>
<evidence type="ECO:0000305" key="2"/>
<feature type="chain" id="PRO_0000130684" description="Large ribosomal subunit protein uL24">
    <location>
        <begin position="1"/>
        <end position="105"/>
    </location>
</feature>
<protein>
    <recommendedName>
        <fullName evidence="1">Large ribosomal subunit protein uL24</fullName>
    </recommendedName>
    <alternativeName>
        <fullName evidence="2">50S ribosomal protein L24</fullName>
    </alternativeName>
</protein>
<organism>
    <name type="scientific">Mycobacterium tuberculosis (strain ATCC 25618 / H37Rv)</name>
    <dbReference type="NCBI Taxonomy" id="83332"/>
    <lineage>
        <taxon>Bacteria</taxon>
        <taxon>Bacillati</taxon>
        <taxon>Actinomycetota</taxon>
        <taxon>Actinomycetes</taxon>
        <taxon>Mycobacteriales</taxon>
        <taxon>Mycobacteriaceae</taxon>
        <taxon>Mycobacterium</taxon>
        <taxon>Mycobacterium tuberculosis complex</taxon>
    </lineage>
</organism>
<name>RL24_MYCTU</name>
<reference key="1">
    <citation type="journal article" date="1998" name="Nature">
        <title>Deciphering the biology of Mycobacterium tuberculosis from the complete genome sequence.</title>
        <authorList>
            <person name="Cole S.T."/>
            <person name="Brosch R."/>
            <person name="Parkhill J."/>
            <person name="Garnier T."/>
            <person name="Churcher C.M."/>
            <person name="Harris D.E."/>
            <person name="Gordon S.V."/>
            <person name="Eiglmeier K."/>
            <person name="Gas S."/>
            <person name="Barry C.E. III"/>
            <person name="Tekaia F."/>
            <person name="Badcock K."/>
            <person name="Basham D."/>
            <person name="Brown D."/>
            <person name="Chillingworth T."/>
            <person name="Connor R."/>
            <person name="Davies R.M."/>
            <person name="Devlin K."/>
            <person name="Feltwell T."/>
            <person name="Gentles S."/>
            <person name="Hamlin N."/>
            <person name="Holroyd S."/>
            <person name="Hornsby T."/>
            <person name="Jagels K."/>
            <person name="Krogh A."/>
            <person name="McLean J."/>
            <person name="Moule S."/>
            <person name="Murphy L.D."/>
            <person name="Oliver S."/>
            <person name="Osborne J."/>
            <person name="Quail M.A."/>
            <person name="Rajandream M.A."/>
            <person name="Rogers J."/>
            <person name="Rutter S."/>
            <person name="Seeger K."/>
            <person name="Skelton S."/>
            <person name="Squares S."/>
            <person name="Squares R."/>
            <person name="Sulston J.E."/>
            <person name="Taylor K."/>
            <person name="Whitehead S."/>
            <person name="Barrell B.G."/>
        </authorList>
    </citation>
    <scope>NUCLEOTIDE SEQUENCE [LARGE SCALE GENOMIC DNA]</scope>
    <source>
        <strain>ATCC 25618 / H37Rv</strain>
    </source>
</reference>
<reference key="2">
    <citation type="journal article" date="2011" name="Mol. Cell. Proteomics">
        <title>Proteogenomic analysis of Mycobacterium tuberculosis by high resolution mass spectrometry.</title>
        <authorList>
            <person name="Kelkar D.S."/>
            <person name="Kumar D."/>
            <person name="Kumar P."/>
            <person name="Balakrishnan L."/>
            <person name="Muthusamy B."/>
            <person name="Yadav A.K."/>
            <person name="Shrivastava P."/>
            <person name="Marimuthu A."/>
            <person name="Anand S."/>
            <person name="Sundaram H."/>
            <person name="Kingsbury R."/>
            <person name="Harsha H.C."/>
            <person name="Nair B."/>
            <person name="Prasad T.S."/>
            <person name="Chauhan D.S."/>
            <person name="Katoch K."/>
            <person name="Katoch V.M."/>
            <person name="Kumar P."/>
            <person name="Chaerkady R."/>
            <person name="Ramachandran S."/>
            <person name="Dash D."/>
            <person name="Pandey A."/>
        </authorList>
    </citation>
    <scope>IDENTIFICATION BY MASS SPECTROMETRY [LARGE SCALE ANALYSIS]</scope>
    <source>
        <strain>ATCC 25618 / H37Rv</strain>
    </source>
</reference>
<keyword id="KW-0002">3D-structure</keyword>
<keyword id="KW-1185">Reference proteome</keyword>
<keyword id="KW-0687">Ribonucleoprotein</keyword>
<keyword id="KW-0689">Ribosomal protein</keyword>
<keyword id="KW-0694">RNA-binding</keyword>
<keyword id="KW-0699">rRNA-binding</keyword>
<comment type="function">
    <text evidence="1">One of two assembly initiator proteins, it binds directly to the 5'-end of the 23S rRNA, where it nucleates assembly of the 50S subunit.</text>
</comment>
<comment type="function">
    <text evidence="1">One of the proteins that surrounds the polypeptide exit tunnel on the outside of the subunit.</text>
</comment>
<comment type="subunit">
    <text evidence="1">Part of the 50S ribosomal subunit.</text>
</comment>
<comment type="similarity">
    <text evidence="1">Belongs to the universal ribosomal protein uL24 family.</text>
</comment>
<dbReference type="EMBL" id="AL123456">
    <property type="protein sequence ID" value="CCP43459.1"/>
    <property type="molecule type" value="Genomic_DNA"/>
</dbReference>
<dbReference type="PIR" id="F70643">
    <property type="entry name" value="F70643"/>
</dbReference>
<dbReference type="RefSeq" id="NP_215229.1">
    <property type="nucleotide sequence ID" value="NC_000962.3"/>
</dbReference>
<dbReference type="RefSeq" id="WP_003403654.1">
    <property type="nucleotide sequence ID" value="NZ_NVQJ01000007.1"/>
</dbReference>
<dbReference type="PDB" id="5V7Q">
    <property type="method" value="EM"/>
    <property type="resolution" value="3.70 A"/>
    <property type="chains" value="U=1-105"/>
</dbReference>
<dbReference type="PDB" id="5V93">
    <property type="method" value="EM"/>
    <property type="resolution" value="4.00 A"/>
    <property type="chains" value="U=1-105"/>
</dbReference>
<dbReference type="PDB" id="7KGB">
    <property type="method" value="EM"/>
    <property type="resolution" value="2.70 A"/>
    <property type="chains" value="U=1-105"/>
</dbReference>
<dbReference type="PDB" id="7MSC">
    <property type="method" value="EM"/>
    <property type="resolution" value="2.97 A"/>
    <property type="chains" value="U=1-105"/>
</dbReference>
<dbReference type="PDB" id="7MSH">
    <property type="method" value="EM"/>
    <property type="resolution" value="3.23 A"/>
    <property type="chains" value="U=1-105"/>
</dbReference>
<dbReference type="PDB" id="7MSM">
    <property type="method" value="EM"/>
    <property type="resolution" value="2.79 A"/>
    <property type="chains" value="U=1-105"/>
</dbReference>
<dbReference type="PDB" id="7MSZ">
    <property type="method" value="EM"/>
    <property type="resolution" value="3.10 A"/>
    <property type="chains" value="U=1-105"/>
</dbReference>
<dbReference type="PDB" id="7MT2">
    <property type="method" value="EM"/>
    <property type="resolution" value="2.76 A"/>
    <property type="chains" value="U=1-105"/>
</dbReference>
<dbReference type="PDB" id="7MT3">
    <property type="method" value="EM"/>
    <property type="resolution" value="2.80 A"/>
    <property type="chains" value="U=1-105"/>
</dbReference>
<dbReference type="PDB" id="7MT7">
    <property type="method" value="EM"/>
    <property type="resolution" value="2.71 A"/>
    <property type="chains" value="U=1-105"/>
</dbReference>
<dbReference type="PDB" id="7SFR">
    <property type="method" value="EM"/>
    <property type="resolution" value="2.60 A"/>
    <property type="chains" value="U=1-105"/>
</dbReference>
<dbReference type="PDBsum" id="5V7Q"/>
<dbReference type="PDBsum" id="5V93"/>
<dbReference type="PDBsum" id="7KGB"/>
<dbReference type="PDBsum" id="7MSC"/>
<dbReference type="PDBsum" id="7MSH"/>
<dbReference type="PDBsum" id="7MSM"/>
<dbReference type="PDBsum" id="7MSZ"/>
<dbReference type="PDBsum" id="7MT2"/>
<dbReference type="PDBsum" id="7MT3"/>
<dbReference type="PDBsum" id="7MT7"/>
<dbReference type="PDBsum" id="7SFR"/>
<dbReference type="EMDB" id="EMD-22865"/>
<dbReference type="EMDB" id="EMD-23961"/>
<dbReference type="EMDB" id="EMD-23962"/>
<dbReference type="EMDB" id="EMD-23969"/>
<dbReference type="EMDB" id="EMD-23972"/>
<dbReference type="EMDB" id="EMD-23974"/>
<dbReference type="EMDB" id="EMD-23975"/>
<dbReference type="EMDB" id="EMD-23976"/>
<dbReference type="EMDB" id="EMD-8645"/>
<dbReference type="SMR" id="P9WHB7"/>
<dbReference type="FunCoup" id="P9WHB7">
    <property type="interactions" value="162"/>
</dbReference>
<dbReference type="STRING" id="83332.Rv0715"/>
<dbReference type="PaxDb" id="83332-Rv0715"/>
<dbReference type="DNASU" id="888421"/>
<dbReference type="GeneID" id="45424680"/>
<dbReference type="GeneID" id="888421"/>
<dbReference type="KEGG" id="mtu:Rv0715"/>
<dbReference type="KEGG" id="mtv:RVBD_0715"/>
<dbReference type="TubercuList" id="Rv0715"/>
<dbReference type="eggNOG" id="COG0198">
    <property type="taxonomic scope" value="Bacteria"/>
</dbReference>
<dbReference type="InParanoid" id="P9WHB7"/>
<dbReference type="OrthoDB" id="9807419at2"/>
<dbReference type="PhylomeDB" id="P9WHB7"/>
<dbReference type="PRO" id="PR:P9WHB7"/>
<dbReference type="Proteomes" id="UP000001584">
    <property type="component" value="Chromosome"/>
</dbReference>
<dbReference type="GO" id="GO:0022625">
    <property type="term" value="C:cytosolic large ribosomal subunit"/>
    <property type="evidence" value="ECO:0000318"/>
    <property type="project" value="GO_Central"/>
</dbReference>
<dbReference type="GO" id="GO:0009274">
    <property type="term" value="C:peptidoglycan-based cell wall"/>
    <property type="evidence" value="ECO:0007005"/>
    <property type="project" value="MTBBASE"/>
</dbReference>
<dbReference type="GO" id="GO:0019843">
    <property type="term" value="F:rRNA binding"/>
    <property type="evidence" value="ECO:0007669"/>
    <property type="project" value="UniProtKB-UniRule"/>
</dbReference>
<dbReference type="GO" id="GO:0003735">
    <property type="term" value="F:structural constituent of ribosome"/>
    <property type="evidence" value="ECO:0007669"/>
    <property type="project" value="InterPro"/>
</dbReference>
<dbReference type="GO" id="GO:0006412">
    <property type="term" value="P:translation"/>
    <property type="evidence" value="ECO:0000318"/>
    <property type="project" value="GO_Central"/>
</dbReference>
<dbReference type="CDD" id="cd06089">
    <property type="entry name" value="KOW_RPL26"/>
    <property type="match status" value="1"/>
</dbReference>
<dbReference type="FunFam" id="2.30.30.30:FF:000004">
    <property type="entry name" value="50S ribosomal protein L24"/>
    <property type="match status" value="1"/>
</dbReference>
<dbReference type="Gene3D" id="2.30.30.30">
    <property type="match status" value="1"/>
</dbReference>
<dbReference type="HAMAP" id="MF_01326_B">
    <property type="entry name" value="Ribosomal_uL24_B"/>
    <property type="match status" value="1"/>
</dbReference>
<dbReference type="InterPro" id="IPR005824">
    <property type="entry name" value="KOW"/>
</dbReference>
<dbReference type="InterPro" id="IPR014722">
    <property type="entry name" value="Rib_uL2_dom2"/>
</dbReference>
<dbReference type="InterPro" id="IPR003256">
    <property type="entry name" value="Ribosomal_uL24"/>
</dbReference>
<dbReference type="InterPro" id="IPR005825">
    <property type="entry name" value="Ribosomal_uL24_CS"/>
</dbReference>
<dbReference type="InterPro" id="IPR041988">
    <property type="entry name" value="Ribosomal_uL24_KOW"/>
</dbReference>
<dbReference type="InterPro" id="IPR008991">
    <property type="entry name" value="Translation_prot_SH3-like_sf"/>
</dbReference>
<dbReference type="NCBIfam" id="TIGR01079">
    <property type="entry name" value="rplX_bact"/>
    <property type="match status" value="1"/>
</dbReference>
<dbReference type="PANTHER" id="PTHR12903">
    <property type="entry name" value="MITOCHONDRIAL RIBOSOMAL PROTEIN L24"/>
    <property type="match status" value="1"/>
</dbReference>
<dbReference type="Pfam" id="PF00467">
    <property type="entry name" value="KOW"/>
    <property type="match status" value="1"/>
</dbReference>
<dbReference type="Pfam" id="PF17136">
    <property type="entry name" value="ribosomal_L24"/>
    <property type="match status" value="1"/>
</dbReference>
<dbReference type="SMART" id="SM00739">
    <property type="entry name" value="KOW"/>
    <property type="match status" value="1"/>
</dbReference>
<dbReference type="SUPFAM" id="SSF50104">
    <property type="entry name" value="Translation proteins SH3-like domain"/>
    <property type="match status" value="1"/>
</dbReference>
<dbReference type="PROSITE" id="PS01108">
    <property type="entry name" value="RIBOSOMAL_L24"/>
    <property type="match status" value="1"/>
</dbReference>
<proteinExistence type="evidence at protein level"/>